<keyword id="KW-0067">ATP-binding</keyword>
<keyword id="KW-0436">Ligase</keyword>
<keyword id="KW-0547">Nucleotide-binding</keyword>
<keyword id="KW-0658">Purine biosynthesis</keyword>
<name>PUR7_STRGG</name>
<feature type="chain" id="PRO_1000096018" description="Phosphoribosylaminoimidazole-succinocarboxamide synthase">
    <location>
        <begin position="1"/>
        <end position="304"/>
    </location>
</feature>
<organism>
    <name type="scientific">Streptomyces griseus subsp. griseus (strain JCM 4626 / CBS 651.72 / NBRC 13350 / KCC S-0626 / ISP 5235)</name>
    <dbReference type="NCBI Taxonomy" id="455632"/>
    <lineage>
        <taxon>Bacteria</taxon>
        <taxon>Bacillati</taxon>
        <taxon>Actinomycetota</taxon>
        <taxon>Actinomycetes</taxon>
        <taxon>Kitasatosporales</taxon>
        <taxon>Streptomycetaceae</taxon>
        <taxon>Streptomyces</taxon>
    </lineage>
</organism>
<evidence type="ECO:0000255" key="1">
    <source>
        <dbReference type="HAMAP-Rule" id="MF_00137"/>
    </source>
</evidence>
<dbReference type="EC" id="6.3.2.6" evidence="1"/>
<dbReference type="EMBL" id="AP009493">
    <property type="protein sequence ID" value="BAG20691.1"/>
    <property type="molecule type" value="Genomic_DNA"/>
</dbReference>
<dbReference type="RefSeq" id="WP_003968027.1">
    <property type="nucleotide sequence ID" value="NC_010572.1"/>
</dbReference>
<dbReference type="SMR" id="B1VR40"/>
<dbReference type="KEGG" id="sgr:SGR_3862"/>
<dbReference type="eggNOG" id="COG0152">
    <property type="taxonomic scope" value="Bacteria"/>
</dbReference>
<dbReference type="HOGENOM" id="CLU_045637_0_0_11"/>
<dbReference type="UniPathway" id="UPA00074">
    <property type="reaction ID" value="UER00131"/>
</dbReference>
<dbReference type="Proteomes" id="UP000001685">
    <property type="component" value="Chromosome"/>
</dbReference>
<dbReference type="GO" id="GO:0005737">
    <property type="term" value="C:cytoplasm"/>
    <property type="evidence" value="ECO:0007669"/>
    <property type="project" value="TreeGrafter"/>
</dbReference>
<dbReference type="GO" id="GO:0005524">
    <property type="term" value="F:ATP binding"/>
    <property type="evidence" value="ECO:0007669"/>
    <property type="project" value="UniProtKB-KW"/>
</dbReference>
<dbReference type="GO" id="GO:0004639">
    <property type="term" value="F:phosphoribosylaminoimidazolesuccinocarboxamide synthase activity"/>
    <property type="evidence" value="ECO:0007669"/>
    <property type="project" value="UniProtKB-UniRule"/>
</dbReference>
<dbReference type="GO" id="GO:0006189">
    <property type="term" value="P:'de novo' IMP biosynthetic process"/>
    <property type="evidence" value="ECO:0007669"/>
    <property type="project" value="UniProtKB-UniRule"/>
</dbReference>
<dbReference type="CDD" id="cd01414">
    <property type="entry name" value="SAICAR_synt_Sc"/>
    <property type="match status" value="1"/>
</dbReference>
<dbReference type="FunFam" id="3.30.200.20:FF:000199">
    <property type="entry name" value="Phosphoribosylaminoimidazole-succinocarboxamide synthase"/>
    <property type="match status" value="1"/>
</dbReference>
<dbReference type="FunFam" id="3.30.470.20:FF:000015">
    <property type="entry name" value="Phosphoribosylaminoimidazole-succinocarboxamide synthase"/>
    <property type="match status" value="1"/>
</dbReference>
<dbReference type="Gene3D" id="3.30.470.20">
    <property type="entry name" value="ATP-grasp fold, B domain"/>
    <property type="match status" value="1"/>
</dbReference>
<dbReference type="Gene3D" id="3.30.200.20">
    <property type="entry name" value="Phosphorylase Kinase, domain 1"/>
    <property type="match status" value="1"/>
</dbReference>
<dbReference type="HAMAP" id="MF_00137">
    <property type="entry name" value="SAICAR_synth"/>
    <property type="match status" value="1"/>
</dbReference>
<dbReference type="InterPro" id="IPR028923">
    <property type="entry name" value="SAICAR_synt/ADE2_N"/>
</dbReference>
<dbReference type="InterPro" id="IPR001636">
    <property type="entry name" value="SAICAR_synth"/>
</dbReference>
<dbReference type="InterPro" id="IPR018236">
    <property type="entry name" value="SAICAR_synthetase_CS"/>
</dbReference>
<dbReference type="NCBIfam" id="NF010568">
    <property type="entry name" value="PRK13961.1"/>
    <property type="match status" value="1"/>
</dbReference>
<dbReference type="NCBIfam" id="TIGR00081">
    <property type="entry name" value="purC"/>
    <property type="match status" value="1"/>
</dbReference>
<dbReference type="PANTHER" id="PTHR43700">
    <property type="entry name" value="PHOSPHORIBOSYLAMINOIMIDAZOLE-SUCCINOCARBOXAMIDE SYNTHASE"/>
    <property type="match status" value="1"/>
</dbReference>
<dbReference type="PANTHER" id="PTHR43700:SF1">
    <property type="entry name" value="PHOSPHORIBOSYLAMINOIMIDAZOLE-SUCCINOCARBOXAMIDE SYNTHASE"/>
    <property type="match status" value="1"/>
</dbReference>
<dbReference type="Pfam" id="PF01259">
    <property type="entry name" value="SAICAR_synt"/>
    <property type="match status" value="1"/>
</dbReference>
<dbReference type="SUPFAM" id="SSF56104">
    <property type="entry name" value="SAICAR synthase-like"/>
    <property type="match status" value="1"/>
</dbReference>
<dbReference type="PROSITE" id="PS01058">
    <property type="entry name" value="SAICAR_SYNTHETASE_2"/>
    <property type="match status" value="1"/>
</dbReference>
<accession>B1VR40</accession>
<sequence length="304" mass="33487">MSGFVEKPEPVQVPGLTHLHTGKVRDLYRNEAGDLVMVASDRISAYDWVLPTEIPDKGRVLTRLSLWWFDQLADLVPNHVISTELPPGAPADWAGRTLICKSLRMVEVECVARGYLTGSGLVEYDATRTVCGIGLPEGLVNGSELPGPIFTPATKAAVGDHDENVSYEDIAREVGPETAAELRRTTLDVYRRARDIAHGRGIILADTKFEFGFETAEDGTERLIIADEVLTPDSSRFWPAATWEPGRAQPSYDKQFVRDWLTSPASGWDRASEQPPPALPPEIVAATRAKYIEAYEVLTGTNWA</sequence>
<reference key="1">
    <citation type="journal article" date="2008" name="J. Bacteriol.">
        <title>Genome sequence of the streptomycin-producing microorganism Streptomyces griseus IFO 13350.</title>
        <authorList>
            <person name="Ohnishi Y."/>
            <person name="Ishikawa J."/>
            <person name="Hara H."/>
            <person name="Suzuki H."/>
            <person name="Ikenoya M."/>
            <person name="Ikeda H."/>
            <person name="Yamashita A."/>
            <person name="Hattori M."/>
            <person name="Horinouchi S."/>
        </authorList>
    </citation>
    <scope>NUCLEOTIDE SEQUENCE [LARGE SCALE GENOMIC DNA]</scope>
    <source>
        <strain>JCM 4626 / CBS 651.72 / NBRC 13350 / KCC S-0626 / ISP 5235</strain>
    </source>
</reference>
<protein>
    <recommendedName>
        <fullName evidence="1">Phosphoribosylaminoimidazole-succinocarboxamide synthase</fullName>
        <ecNumber evidence="1">6.3.2.6</ecNumber>
    </recommendedName>
    <alternativeName>
        <fullName evidence="1">SAICAR synthetase</fullName>
    </alternativeName>
</protein>
<proteinExistence type="inferred from homology"/>
<gene>
    <name evidence="1" type="primary">purC</name>
    <name type="ordered locus">SGR_3862</name>
</gene>
<comment type="catalytic activity">
    <reaction evidence="1">
        <text>5-amino-1-(5-phospho-D-ribosyl)imidazole-4-carboxylate + L-aspartate + ATP = (2S)-2-[5-amino-1-(5-phospho-beta-D-ribosyl)imidazole-4-carboxamido]succinate + ADP + phosphate + 2 H(+)</text>
        <dbReference type="Rhea" id="RHEA:22628"/>
        <dbReference type="ChEBI" id="CHEBI:15378"/>
        <dbReference type="ChEBI" id="CHEBI:29991"/>
        <dbReference type="ChEBI" id="CHEBI:30616"/>
        <dbReference type="ChEBI" id="CHEBI:43474"/>
        <dbReference type="ChEBI" id="CHEBI:58443"/>
        <dbReference type="ChEBI" id="CHEBI:77657"/>
        <dbReference type="ChEBI" id="CHEBI:456216"/>
        <dbReference type="EC" id="6.3.2.6"/>
    </reaction>
</comment>
<comment type="pathway">
    <text evidence="1">Purine metabolism; IMP biosynthesis via de novo pathway; 5-amino-1-(5-phospho-D-ribosyl)imidazole-4-carboxamide from 5-amino-1-(5-phospho-D-ribosyl)imidazole-4-carboxylate: step 1/2.</text>
</comment>
<comment type="similarity">
    <text evidence="1">Belongs to the SAICAR synthetase family.</text>
</comment>